<evidence type="ECO:0000255" key="1">
    <source>
        <dbReference type="HAMAP-Rule" id="MF_00139"/>
    </source>
</evidence>
<evidence type="ECO:0000255" key="2">
    <source>
        <dbReference type="PROSITE-ProRule" id="PRU01202"/>
    </source>
</evidence>
<organism>
    <name type="scientific">Streptococcus equi subsp. equi (strain 4047)</name>
    <dbReference type="NCBI Taxonomy" id="553482"/>
    <lineage>
        <taxon>Bacteria</taxon>
        <taxon>Bacillati</taxon>
        <taxon>Bacillota</taxon>
        <taxon>Bacilli</taxon>
        <taxon>Lactobacillales</taxon>
        <taxon>Streptococcaceae</taxon>
        <taxon>Streptococcus</taxon>
    </lineage>
</organism>
<dbReference type="EC" id="2.1.2.3" evidence="1"/>
<dbReference type="EC" id="3.5.4.10" evidence="1"/>
<dbReference type="EMBL" id="FM204883">
    <property type="protein sequence ID" value="CAW91925.1"/>
    <property type="molecule type" value="Genomic_DNA"/>
</dbReference>
<dbReference type="RefSeq" id="WP_012678773.1">
    <property type="nucleotide sequence ID" value="NC_012471.1"/>
</dbReference>
<dbReference type="SMR" id="C0MB61"/>
<dbReference type="KEGG" id="seu:SEQ_0030"/>
<dbReference type="HOGENOM" id="CLU_016316_5_2_9"/>
<dbReference type="OrthoDB" id="9802065at2"/>
<dbReference type="UniPathway" id="UPA00074">
    <property type="reaction ID" value="UER00133"/>
</dbReference>
<dbReference type="UniPathway" id="UPA00074">
    <property type="reaction ID" value="UER00135"/>
</dbReference>
<dbReference type="Proteomes" id="UP000001365">
    <property type="component" value="Chromosome"/>
</dbReference>
<dbReference type="GO" id="GO:0005829">
    <property type="term" value="C:cytosol"/>
    <property type="evidence" value="ECO:0007669"/>
    <property type="project" value="TreeGrafter"/>
</dbReference>
<dbReference type="GO" id="GO:0003937">
    <property type="term" value="F:IMP cyclohydrolase activity"/>
    <property type="evidence" value="ECO:0007669"/>
    <property type="project" value="UniProtKB-UniRule"/>
</dbReference>
<dbReference type="GO" id="GO:0004643">
    <property type="term" value="F:phosphoribosylaminoimidazolecarboxamide formyltransferase activity"/>
    <property type="evidence" value="ECO:0007669"/>
    <property type="project" value="UniProtKB-UniRule"/>
</dbReference>
<dbReference type="GO" id="GO:0006189">
    <property type="term" value="P:'de novo' IMP biosynthetic process"/>
    <property type="evidence" value="ECO:0007669"/>
    <property type="project" value="UniProtKB-UniRule"/>
</dbReference>
<dbReference type="CDD" id="cd01421">
    <property type="entry name" value="IMPCH"/>
    <property type="match status" value="1"/>
</dbReference>
<dbReference type="FunFam" id="3.40.140.20:FF:000001">
    <property type="entry name" value="Bifunctional purine biosynthesis protein PurH"/>
    <property type="match status" value="1"/>
</dbReference>
<dbReference type="FunFam" id="3.40.140.20:FF:000002">
    <property type="entry name" value="Bifunctional purine biosynthesis protein PurH"/>
    <property type="match status" value="1"/>
</dbReference>
<dbReference type="FunFam" id="3.40.50.1380:FF:000001">
    <property type="entry name" value="Bifunctional purine biosynthesis protein PurH"/>
    <property type="match status" value="1"/>
</dbReference>
<dbReference type="Gene3D" id="3.40.140.20">
    <property type="match status" value="2"/>
</dbReference>
<dbReference type="Gene3D" id="3.40.50.1380">
    <property type="entry name" value="Methylglyoxal synthase-like domain"/>
    <property type="match status" value="1"/>
</dbReference>
<dbReference type="HAMAP" id="MF_00139">
    <property type="entry name" value="PurH"/>
    <property type="match status" value="1"/>
</dbReference>
<dbReference type="InterPro" id="IPR024051">
    <property type="entry name" value="AICAR_Tfase_dup_dom_sf"/>
</dbReference>
<dbReference type="InterPro" id="IPR016193">
    <property type="entry name" value="Cytidine_deaminase-like"/>
</dbReference>
<dbReference type="InterPro" id="IPR011607">
    <property type="entry name" value="MGS-like_dom"/>
</dbReference>
<dbReference type="InterPro" id="IPR036914">
    <property type="entry name" value="MGS-like_dom_sf"/>
</dbReference>
<dbReference type="InterPro" id="IPR002695">
    <property type="entry name" value="PurH-like"/>
</dbReference>
<dbReference type="NCBIfam" id="NF002049">
    <property type="entry name" value="PRK00881.1"/>
    <property type="match status" value="1"/>
</dbReference>
<dbReference type="NCBIfam" id="TIGR00355">
    <property type="entry name" value="purH"/>
    <property type="match status" value="1"/>
</dbReference>
<dbReference type="PANTHER" id="PTHR11692:SF0">
    <property type="entry name" value="BIFUNCTIONAL PURINE BIOSYNTHESIS PROTEIN ATIC"/>
    <property type="match status" value="1"/>
</dbReference>
<dbReference type="PANTHER" id="PTHR11692">
    <property type="entry name" value="BIFUNCTIONAL PURINE BIOSYNTHESIS PROTEIN PURH"/>
    <property type="match status" value="1"/>
</dbReference>
<dbReference type="Pfam" id="PF01808">
    <property type="entry name" value="AICARFT_IMPCHas"/>
    <property type="match status" value="1"/>
</dbReference>
<dbReference type="Pfam" id="PF02142">
    <property type="entry name" value="MGS"/>
    <property type="match status" value="1"/>
</dbReference>
<dbReference type="PIRSF" id="PIRSF000414">
    <property type="entry name" value="AICARFT_IMPCHas"/>
    <property type="match status" value="1"/>
</dbReference>
<dbReference type="SMART" id="SM00798">
    <property type="entry name" value="AICARFT_IMPCHas"/>
    <property type="match status" value="1"/>
</dbReference>
<dbReference type="SMART" id="SM00851">
    <property type="entry name" value="MGS"/>
    <property type="match status" value="1"/>
</dbReference>
<dbReference type="SUPFAM" id="SSF53927">
    <property type="entry name" value="Cytidine deaminase-like"/>
    <property type="match status" value="1"/>
</dbReference>
<dbReference type="SUPFAM" id="SSF52335">
    <property type="entry name" value="Methylglyoxal synthase-like"/>
    <property type="match status" value="1"/>
</dbReference>
<dbReference type="PROSITE" id="PS51855">
    <property type="entry name" value="MGS"/>
    <property type="match status" value="1"/>
</dbReference>
<proteinExistence type="inferred from homology"/>
<protein>
    <recommendedName>
        <fullName evidence="1">Bifunctional purine biosynthesis protein PurH</fullName>
    </recommendedName>
    <domain>
        <recommendedName>
            <fullName evidence="1">Phosphoribosylaminoimidazolecarboxamide formyltransferase</fullName>
            <ecNumber evidence="1">2.1.2.3</ecNumber>
        </recommendedName>
        <alternativeName>
            <fullName evidence="1">AICAR transformylase</fullName>
        </alternativeName>
    </domain>
    <domain>
        <recommendedName>
            <fullName evidence="1">IMP cyclohydrolase</fullName>
            <ecNumber evidence="1">3.5.4.10</ecNumber>
        </recommendedName>
        <alternativeName>
            <fullName evidence="1">ATIC</fullName>
        </alternativeName>
        <alternativeName>
            <fullName evidence="1">IMP synthase</fullName>
        </alternativeName>
        <alternativeName>
            <fullName evidence="1">Inosinicase</fullName>
        </alternativeName>
    </domain>
</protein>
<keyword id="KW-0378">Hydrolase</keyword>
<keyword id="KW-0511">Multifunctional enzyme</keyword>
<keyword id="KW-0658">Purine biosynthesis</keyword>
<keyword id="KW-0808">Transferase</keyword>
<feature type="chain" id="PRO_1000122972" description="Bifunctional purine biosynthesis protein PurH">
    <location>
        <begin position="1"/>
        <end position="515"/>
    </location>
</feature>
<feature type="domain" description="MGS-like" evidence="2">
    <location>
        <begin position="1"/>
        <end position="145"/>
    </location>
</feature>
<gene>
    <name evidence="1" type="primary">purH</name>
    <name type="ordered locus">SEQ_0030</name>
</gene>
<sequence>MTKRALISVSDKRGIVDLARELKHLGWDIISTGGTRLALEEAGVVTVAIDDVTGFPEMMDGRVKTLHPLIHGGLLARRDIEHHLQAAKQNRIELIDLVVVNLYPFKETICRPDVTYDVAVDMVDIGGPSLLRSAAKNHASVTVVVDPTDYPLVLGELASTGSTSYQTRQSLAAKAFRHTAAYDAVIADYFTRQAGETKPEKLTLTYDLKQSMRYGENPQQAADFYQRALPTTYSIASAKQLNGKELSFNNIRDADAAIRIIRDFKERPTVVALKHMNPCGIGQADDIETAWDFAYAADPVSIFGGIVVLNREVDLATAEKLHAIFLELIIAPGYSKEALAVLTHKKKHLRILELPFAAQEASEIEAEYTGVLGGLLVQNQDVVTESPADWIVVTKRQPNEQEMAALAFAWKTIKYVKSNAIVIANDHMTLGVGPGQTNRIASIRIAIAQATGQLEGAVLASDAFFPFADSIEEIAAAGIKAIIQPGGSIRDSESIAAANQHGITMIFTGVRHFRH</sequence>
<name>PUR9_STRE4</name>
<reference key="1">
    <citation type="journal article" date="2009" name="PLoS Pathog.">
        <title>Genomic evidence for the evolution of Streptococcus equi: host restriction, increased virulence, and genetic exchange with human pathogens.</title>
        <authorList>
            <person name="Holden M.T.G."/>
            <person name="Heather Z."/>
            <person name="Paillot R."/>
            <person name="Steward K.F."/>
            <person name="Webb K."/>
            <person name="Ainslie F."/>
            <person name="Jourdan T."/>
            <person name="Bason N.C."/>
            <person name="Holroyd N.E."/>
            <person name="Mungall K."/>
            <person name="Quail M.A."/>
            <person name="Sanders M."/>
            <person name="Simmonds M."/>
            <person name="Willey D."/>
            <person name="Brooks K."/>
            <person name="Aanensen D.M."/>
            <person name="Spratt B.G."/>
            <person name="Jolley K.A."/>
            <person name="Maiden M.C.J."/>
            <person name="Kehoe M."/>
            <person name="Chanter N."/>
            <person name="Bentley S.D."/>
            <person name="Robinson C."/>
            <person name="Maskell D.J."/>
            <person name="Parkhill J."/>
            <person name="Waller A.S."/>
        </authorList>
    </citation>
    <scope>NUCLEOTIDE SEQUENCE [LARGE SCALE GENOMIC DNA]</scope>
    <source>
        <strain>4047</strain>
    </source>
</reference>
<accession>C0MB61</accession>
<comment type="catalytic activity">
    <reaction evidence="1">
        <text>(6R)-10-formyltetrahydrofolate + 5-amino-1-(5-phospho-beta-D-ribosyl)imidazole-4-carboxamide = 5-formamido-1-(5-phospho-D-ribosyl)imidazole-4-carboxamide + (6S)-5,6,7,8-tetrahydrofolate</text>
        <dbReference type="Rhea" id="RHEA:22192"/>
        <dbReference type="ChEBI" id="CHEBI:57453"/>
        <dbReference type="ChEBI" id="CHEBI:58467"/>
        <dbReference type="ChEBI" id="CHEBI:58475"/>
        <dbReference type="ChEBI" id="CHEBI:195366"/>
        <dbReference type="EC" id="2.1.2.3"/>
    </reaction>
</comment>
<comment type="catalytic activity">
    <reaction evidence="1">
        <text>IMP + H2O = 5-formamido-1-(5-phospho-D-ribosyl)imidazole-4-carboxamide</text>
        <dbReference type="Rhea" id="RHEA:18445"/>
        <dbReference type="ChEBI" id="CHEBI:15377"/>
        <dbReference type="ChEBI" id="CHEBI:58053"/>
        <dbReference type="ChEBI" id="CHEBI:58467"/>
        <dbReference type="EC" id="3.5.4.10"/>
    </reaction>
</comment>
<comment type="pathway">
    <text evidence="1">Purine metabolism; IMP biosynthesis via de novo pathway; 5-formamido-1-(5-phospho-D-ribosyl)imidazole-4-carboxamide from 5-amino-1-(5-phospho-D-ribosyl)imidazole-4-carboxamide (10-formyl THF route): step 1/1.</text>
</comment>
<comment type="pathway">
    <text evidence="1">Purine metabolism; IMP biosynthesis via de novo pathway; IMP from 5-formamido-1-(5-phospho-D-ribosyl)imidazole-4-carboxamide: step 1/1.</text>
</comment>
<comment type="domain">
    <text evidence="1">The IMP cyclohydrolase activity resides in the N-terminal region.</text>
</comment>
<comment type="similarity">
    <text evidence="1">Belongs to the PurH family.</text>
</comment>